<dbReference type="EC" id="5.4.2.10" evidence="1"/>
<dbReference type="EMBL" id="CP000539">
    <property type="protein sequence ID" value="ABM42542.1"/>
    <property type="molecule type" value="Genomic_DNA"/>
</dbReference>
<dbReference type="SMR" id="A1W8G7"/>
<dbReference type="STRING" id="232721.Ajs_2381"/>
<dbReference type="KEGG" id="ajs:Ajs_2381"/>
<dbReference type="eggNOG" id="COG1109">
    <property type="taxonomic scope" value="Bacteria"/>
</dbReference>
<dbReference type="HOGENOM" id="CLU_016950_7_0_4"/>
<dbReference type="Proteomes" id="UP000000645">
    <property type="component" value="Chromosome"/>
</dbReference>
<dbReference type="GO" id="GO:0005829">
    <property type="term" value="C:cytosol"/>
    <property type="evidence" value="ECO:0007669"/>
    <property type="project" value="TreeGrafter"/>
</dbReference>
<dbReference type="GO" id="GO:0000287">
    <property type="term" value="F:magnesium ion binding"/>
    <property type="evidence" value="ECO:0007669"/>
    <property type="project" value="UniProtKB-UniRule"/>
</dbReference>
<dbReference type="GO" id="GO:0008966">
    <property type="term" value="F:phosphoglucosamine mutase activity"/>
    <property type="evidence" value="ECO:0007669"/>
    <property type="project" value="UniProtKB-UniRule"/>
</dbReference>
<dbReference type="GO" id="GO:0004615">
    <property type="term" value="F:phosphomannomutase activity"/>
    <property type="evidence" value="ECO:0007669"/>
    <property type="project" value="TreeGrafter"/>
</dbReference>
<dbReference type="GO" id="GO:0005975">
    <property type="term" value="P:carbohydrate metabolic process"/>
    <property type="evidence" value="ECO:0007669"/>
    <property type="project" value="InterPro"/>
</dbReference>
<dbReference type="GO" id="GO:0009252">
    <property type="term" value="P:peptidoglycan biosynthetic process"/>
    <property type="evidence" value="ECO:0007669"/>
    <property type="project" value="TreeGrafter"/>
</dbReference>
<dbReference type="GO" id="GO:0006048">
    <property type="term" value="P:UDP-N-acetylglucosamine biosynthetic process"/>
    <property type="evidence" value="ECO:0007669"/>
    <property type="project" value="TreeGrafter"/>
</dbReference>
<dbReference type="CDD" id="cd05802">
    <property type="entry name" value="GlmM"/>
    <property type="match status" value="1"/>
</dbReference>
<dbReference type="FunFam" id="3.30.310.50:FF:000001">
    <property type="entry name" value="Phosphoglucosamine mutase"/>
    <property type="match status" value="1"/>
</dbReference>
<dbReference type="FunFam" id="3.40.120.10:FF:000001">
    <property type="entry name" value="Phosphoglucosamine mutase"/>
    <property type="match status" value="1"/>
</dbReference>
<dbReference type="FunFam" id="3.40.120.10:FF:000003">
    <property type="entry name" value="Phosphoglucosamine mutase"/>
    <property type="match status" value="1"/>
</dbReference>
<dbReference type="Gene3D" id="3.40.120.10">
    <property type="entry name" value="Alpha-D-Glucose-1,6-Bisphosphate, subunit A, domain 3"/>
    <property type="match status" value="3"/>
</dbReference>
<dbReference type="Gene3D" id="3.30.310.50">
    <property type="entry name" value="Alpha-D-phosphohexomutase, C-terminal domain"/>
    <property type="match status" value="1"/>
</dbReference>
<dbReference type="HAMAP" id="MF_01554_B">
    <property type="entry name" value="GlmM_B"/>
    <property type="match status" value="1"/>
</dbReference>
<dbReference type="InterPro" id="IPR005844">
    <property type="entry name" value="A-D-PHexomutase_a/b/a-I"/>
</dbReference>
<dbReference type="InterPro" id="IPR016055">
    <property type="entry name" value="A-D-PHexomutase_a/b/a-I/II/III"/>
</dbReference>
<dbReference type="InterPro" id="IPR005845">
    <property type="entry name" value="A-D-PHexomutase_a/b/a-II"/>
</dbReference>
<dbReference type="InterPro" id="IPR005846">
    <property type="entry name" value="A-D-PHexomutase_a/b/a-III"/>
</dbReference>
<dbReference type="InterPro" id="IPR005843">
    <property type="entry name" value="A-D-PHexomutase_C"/>
</dbReference>
<dbReference type="InterPro" id="IPR036900">
    <property type="entry name" value="A-D-PHexomutase_C_sf"/>
</dbReference>
<dbReference type="InterPro" id="IPR016066">
    <property type="entry name" value="A-D-PHexomutase_CS"/>
</dbReference>
<dbReference type="InterPro" id="IPR005841">
    <property type="entry name" value="Alpha-D-phosphohexomutase_SF"/>
</dbReference>
<dbReference type="InterPro" id="IPR006352">
    <property type="entry name" value="GlmM_bact"/>
</dbReference>
<dbReference type="InterPro" id="IPR050060">
    <property type="entry name" value="Phosphoglucosamine_mutase"/>
</dbReference>
<dbReference type="NCBIfam" id="TIGR01455">
    <property type="entry name" value="glmM"/>
    <property type="match status" value="1"/>
</dbReference>
<dbReference type="NCBIfam" id="NF008139">
    <property type="entry name" value="PRK10887.1"/>
    <property type="match status" value="1"/>
</dbReference>
<dbReference type="PANTHER" id="PTHR42946:SF1">
    <property type="entry name" value="PHOSPHOGLUCOMUTASE (ALPHA-D-GLUCOSE-1,6-BISPHOSPHATE-DEPENDENT)"/>
    <property type="match status" value="1"/>
</dbReference>
<dbReference type="PANTHER" id="PTHR42946">
    <property type="entry name" value="PHOSPHOHEXOSE MUTASE"/>
    <property type="match status" value="1"/>
</dbReference>
<dbReference type="Pfam" id="PF02878">
    <property type="entry name" value="PGM_PMM_I"/>
    <property type="match status" value="1"/>
</dbReference>
<dbReference type="Pfam" id="PF02879">
    <property type="entry name" value="PGM_PMM_II"/>
    <property type="match status" value="1"/>
</dbReference>
<dbReference type="Pfam" id="PF02880">
    <property type="entry name" value="PGM_PMM_III"/>
    <property type="match status" value="1"/>
</dbReference>
<dbReference type="Pfam" id="PF00408">
    <property type="entry name" value="PGM_PMM_IV"/>
    <property type="match status" value="1"/>
</dbReference>
<dbReference type="PRINTS" id="PR00509">
    <property type="entry name" value="PGMPMM"/>
</dbReference>
<dbReference type="SUPFAM" id="SSF55957">
    <property type="entry name" value="Phosphoglucomutase, C-terminal domain"/>
    <property type="match status" value="1"/>
</dbReference>
<dbReference type="SUPFAM" id="SSF53738">
    <property type="entry name" value="Phosphoglucomutase, first 3 domains"/>
    <property type="match status" value="3"/>
</dbReference>
<dbReference type="PROSITE" id="PS00710">
    <property type="entry name" value="PGM_PMM"/>
    <property type="match status" value="1"/>
</dbReference>
<keyword id="KW-0413">Isomerase</keyword>
<keyword id="KW-0460">Magnesium</keyword>
<keyword id="KW-0479">Metal-binding</keyword>
<keyword id="KW-0597">Phosphoprotein</keyword>
<reference key="1">
    <citation type="submission" date="2006-12" db="EMBL/GenBank/DDBJ databases">
        <title>Complete sequence of chromosome 1 of Acidovorax sp. JS42.</title>
        <authorList>
            <person name="Copeland A."/>
            <person name="Lucas S."/>
            <person name="Lapidus A."/>
            <person name="Barry K."/>
            <person name="Detter J.C."/>
            <person name="Glavina del Rio T."/>
            <person name="Dalin E."/>
            <person name="Tice H."/>
            <person name="Pitluck S."/>
            <person name="Chertkov O."/>
            <person name="Brettin T."/>
            <person name="Bruce D."/>
            <person name="Han C."/>
            <person name="Tapia R."/>
            <person name="Gilna P."/>
            <person name="Schmutz J."/>
            <person name="Larimer F."/>
            <person name="Land M."/>
            <person name="Hauser L."/>
            <person name="Kyrpides N."/>
            <person name="Kim E."/>
            <person name="Stahl D."/>
            <person name="Richardson P."/>
        </authorList>
    </citation>
    <scope>NUCLEOTIDE SEQUENCE [LARGE SCALE GENOMIC DNA]</scope>
    <source>
        <strain>JS42</strain>
    </source>
</reference>
<organism>
    <name type="scientific">Acidovorax sp. (strain JS42)</name>
    <dbReference type="NCBI Taxonomy" id="232721"/>
    <lineage>
        <taxon>Bacteria</taxon>
        <taxon>Pseudomonadati</taxon>
        <taxon>Pseudomonadota</taxon>
        <taxon>Betaproteobacteria</taxon>
        <taxon>Burkholderiales</taxon>
        <taxon>Comamonadaceae</taxon>
        <taxon>Acidovorax</taxon>
    </lineage>
</organism>
<accession>A1W8G7</accession>
<sequence length="444" mass="47829">MTRKYFGTDGIRGTVGQSPITPDFALRLAHAVGRVLRRTQERPTVLIGKDTRISGYMLESALESGFNSAGVDVVLLGPLPTPGVAYLTRAQRASLGVVISASHNPYPDNGIKFFSAQGTKLPDAWEEEVEAALEQPPVWADSASLGKTRRLDDAAGRYIEFCKSTFANDLTLRGLKIVVDAAHGAAYHIAPKVFHELGAEVMAIGCAPDGLNINHQVGATHPDALVRAVRANHADYGIALDGDADRVQMVDAAGRLFNGDELLYVMVAARLARDEHVPGVVGTLMTNMAVEEALQRRGVKFMRAKVGDRYVLEELQRQHWLLGGEGSGHLLALDRHTTGDGLISALQVLQACVRSGKTLAQLLADVPLFPQVLLNVRLNPGQDWKTNPVLADAIRDAEAELGAHGRVLVRASGTEPLLRVMVEAREAEQANRCAQRMADAARAG</sequence>
<proteinExistence type="inferred from homology"/>
<evidence type="ECO:0000255" key="1">
    <source>
        <dbReference type="HAMAP-Rule" id="MF_01554"/>
    </source>
</evidence>
<name>GLMM_ACISJ</name>
<comment type="function">
    <text evidence="1">Catalyzes the conversion of glucosamine-6-phosphate to glucosamine-1-phosphate.</text>
</comment>
<comment type="catalytic activity">
    <reaction evidence="1">
        <text>alpha-D-glucosamine 1-phosphate = D-glucosamine 6-phosphate</text>
        <dbReference type="Rhea" id="RHEA:23424"/>
        <dbReference type="ChEBI" id="CHEBI:58516"/>
        <dbReference type="ChEBI" id="CHEBI:58725"/>
        <dbReference type="EC" id="5.4.2.10"/>
    </reaction>
</comment>
<comment type="cofactor">
    <cofactor evidence="1">
        <name>Mg(2+)</name>
        <dbReference type="ChEBI" id="CHEBI:18420"/>
    </cofactor>
    <text evidence="1">Binds 1 Mg(2+) ion per subunit.</text>
</comment>
<comment type="PTM">
    <text evidence="1">Activated by phosphorylation.</text>
</comment>
<comment type="similarity">
    <text evidence="1">Belongs to the phosphohexose mutase family.</text>
</comment>
<gene>
    <name evidence="1" type="primary">glmM</name>
    <name type="ordered locus">Ajs_2381</name>
</gene>
<protein>
    <recommendedName>
        <fullName evidence="1">Phosphoglucosamine mutase</fullName>
        <ecNumber evidence="1">5.4.2.10</ecNumber>
    </recommendedName>
</protein>
<feature type="chain" id="PRO_0000301270" description="Phosphoglucosamine mutase">
    <location>
        <begin position="1"/>
        <end position="444"/>
    </location>
</feature>
<feature type="active site" description="Phosphoserine intermediate" evidence="1">
    <location>
        <position position="102"/>
    </location>
</feature>
<feature type="binding site" description="via phosphate group" evidence="1">
    <location>
        <position position="102"/>
    </location>
    <ligand>
        <name>Mg(2+)</name>
        <dbReference type="ChEBI" id="CHEBI:18420"/>
    </ligand>
</feature>
<feature type="binding site" evidence="1">
    <location>
        <position position="241"/>
    </location>
    <ligand>
        <name>Mg(2+)</name>
        <dbReference type="ChEBI" id="CHEBI:18420"/>
    </ligand>
</feature>
<feature type="binding site" evidence="1">
    <location>
        <position position="243"/>
    </location>
    <ligand>
        <name>Mg(2+)</name>
        <dbReference type="ChEBI" id="CHEBI:18420"/>
    </ligand>
</feature>
<feature type="binding site" evidence="1">
    <location>
        <position position="245"/>
    </location>
    <ligand>
        <name>Mg(2+)</name>
        <dbReference type="ChEBI" id="CHEBI:18420"/>
    </ligand>
</feature>
<feature type="modified residue" description="Phosphoserine" evidence="1">
    <location>
        <position position="102"/>
    </location>
</feature>